<proteinExistence type="inferred from homology"/>
<organism>
    <name type="scientific">Shewanella baltica (strain OS185)</name>
    <dbReference type="NCBI Taxonomy" id="402882"/>
    <lineage>
        <taxon>Bacteria</taxon>
        <taxon>Pseudomonadati</taxon>
        <taxon>Pseudomonadota</taxon>
        <taxon>Gammaproteobacteria</taxon>
        <taxon>Alteromonadales</taxon>
        <taxon>Shewanellaceae</taxon>
        <taxon>Shewanella</taxon>
    </lineage>
</organism>
<dbReference type="EC" id="2.1.1.192" evidence="1"/>
<dbReference type="EMBL" id="CP000753">
    <property type="protein sequence ID" value="ABS09139.1"/>
    <property type="molecule type" value="Genomic_DNA"/>
</dbReference>
<dbReference type="RefSeq" id="WP_012089734.1">
    <property type="nucleotide sequence ID" value="NC_009665.1"/>
</dbReference>
<dbReference type="SMR" id="A6WQQ0"/>
<dbReference type="KEGG" id="sbm:Shew185_3008"/>
<dbReference type="HOGENOM" id="CLU_029101_2_0_6"/>
<dbReference type="GO" id="GO:0005737">
    <property type="term" value="C:cytoplasm"/>
    <property type="evidence" value="ECO:0007669"/>
    <property type="project" value="UniProtKB-SubCell"/>
</dbReference>
<dbReference type="GO" id="GO:0051539">
    <property type="term" value="F:4 iron, 4 sulfur cluster binding"/>
    <property type="evidence" value="ECO:0007669"/>
    <property type="project" value="UniProtKB-UniRule"/>
</dbReference>
<dbReference type="GO" id="GO:0046872">
    <property type="term" value="F:metal ion binding"/>
    <property type="evidence" value="ECO:0007669"/>
    <property type="project" value="UniProtKB-KW"/>
</dbReference>
<dbReference type="GO" id="GO:0070040">
    <property type="term" value="F:rRNA (adenine(2503)-C2-)-methyltransferase activity"/>
    <property type="evidence" value="ECO:0007669"/>
    <property type="project" value="UniProtKB-UniRule"/>
</dbReference>
<dbReference type="GO" id="GO:0019843">
    <property type="term" value="F:rRNA binding"/>
    <property type="evidence" value="ECO:0007669"/>
    <property type="project" value="UniProtKB-UniRule"/>
</dbReference>
<dbReference type="GO" id="GO:0002935">
    <property type="term" value="F:tRNA (adenine(37)-C2)-methyltransferase activity"/>
    <property type="evidence" value="ECO:0007669"/>
    <property type="project" value="UniProtKB-UniRule"/>
</dbReference>
<dbReference type="GO" id="GO:0000049">
    <property type="term" value="F:tRNA binding"/>
    <property type="evidence" value="ECO:0007669"/>
    <property type="project" value="UniProtKB-UniRule"/>
</dbReference>
<dbReference type="GO" id="GO:0070475">
    <property type="term" value="P:rRNA base methylation"/>
    <property type="evidence" value="ECO:0007669"/>
    <property type="project" value="UniProtKB-UniRule"/>
</dbReference>
<dbReference type="GO" id="GO:0030488">
    <property type="term" value="P:tRNA methylation"/>
    <property type="evidence" value="ECO:0007669"/>
    <property type="project" value="UniProtKB-UniRule"/>
</dbReference>
<dbReference type="CDD" id="cd01335">
    <property type="entry name" value="Radical_SAM"/>
    <property type="match status" value="1"/>
</dbReference>
<dbReference type="FunFam" id="1.10.150.530:FF:000003">
    <property type="entry name" value="Dual-specificity RNA methyltransferase RlmN"/>
    <property type="match status" value="1"/>
</dbReference>
<dbReference type="FunFam" id="3.20.20.70:FF:000008">
    <property type="entry name" value="Dual-specificity RNA methyltransferase RlmN"/>
    <property type="match status" value="1"/>
</dbReference>
<dbReference type="Gene3D" id="1.10.150.530">
    <property type="match status" value="1"/>
</dbReference>
<dbReference type="Gene3D" id="3.20.20.70">
    <property type="entry name" value="Aldolase class I"/>
    <property type="match status" value="1"/>
</dbReference>
<dbReference type="HAMAP" id="MF_01849">
    <property type="entry name" value="RNA_methyltr_RlmN"/>
    <property type="match status" value="1"/>
</dbReference>
<dbReference type="InterPro" id="IPR013785">
    <property type="entry name" value="Aldolase_TIM"/>
</dbReference>
<dbReference type="InterPro" id="IPR040072">
    <property type="entry name" value="Methyltransferase_A"/>
</dbReference>
<dbReference type="InterPro" id="IPR048641">
    <property type="entry name" value="RlmN_N"/>
</dbReference>
<dbReference type="InterPro" id="IPR027492">
    <property type="entry name" value="RNA_MTrfase_RlmN"/>
</dbReference>
<dbReference type="InterPro" id="IPR004383">
    <property type="entry name" value="rRNA_lsu_MTrfase_RlmN/Cfr"/>
</dbReference>
<dbReference type="InterPro" id="IPR007197">
    <property type="entry name" value="rSAM"/>
</dbReference>
<dbReference type="NCBIfam" id="NF008396">
    <property type="entry name" value="PRK11194.1"/>
    <property type="match status" value="1"/>
</dbReference>
<dbReference type="NCBIfam" id="TIGR00048">
    <property type="entry name" value="rRNA_mod_RlmN"/>
    <property type="match status" value="1"/>
</dbReference>
<dbReference type="PANTHER" id="PTHR30544">
    <property type="entry name" value="23S RRNA METHYLTRANSFERASE"/>
    <property type="match status" value="1"/>
</dbReference>
<dbReference type="PANTHER" id="PTHR30544:SF5">
    <property type="entry name" value="RADICAL SAM CORE DOMAIN-CONTAINING PROTEIN"/>
    <property type="match status" value="1"/>
</dbReference>
<dbReference type="Pfam" id="PF04055">
    <property type="entry name" value="Radical_SAM"/>
    <property type="match status" value="1"/>
</dbReference>
<dbReference type="Pfam" id="PF21016">
    <property type="entry name" value="RlmN_N"/>
    <property type="match status" value="1"/>
</dbReference>
<dbReference type="PIRSF" id="PIRSF006004">
    <property type="entry name" value="CHP00048"/>
    <property type="match status" value="1"/>
</dbReference>
<dbReference type="SFLD" id="SFLDF00275">
    <property type="entry name" value="adenosine_C2_methyltransferase"/>
    <property type="match status" value="1"/>
</dbReference>
<dbReference type="SFLD" id="SFLDG01062">
    <property type="entry name" value="methyltransferase_(Class_A)"/>
    <property type="match status" value="1"/>
</dbReference>
<dbReference type="SUPFAM" id="SSF102114">
    <property type="entry name" value="Radical SAM enzymes"/>
    <property type="match status" value="1"/>
</dbReference>
<dbReference type="PROSITE" id="PS51918">
    <property type="entry name" value="RADICAL_SAM"/>
    <property type="match status" value="1"/>
</dbReference>
<evidence type="ECO:0000255" key="1">
    <source>
        <dbReference type="HAMAP-Rule" id="MF_01849"/>
    </source>
</evidence>
<evidence type="ECO:0000255" key="2">
    <source>
        <dbReference type="PROSITE-ProRule" id="PRU01266"/>
    </source>
</evidence>
<keyword id="KW-0004">4Fe-4S</keyword>
<keyword id="KW-0963">Cytoplasm</keyword>
<keyword id="KW-1015">Disulfide bond</keyword>
<keyword id="KW-0408">Iron</keyword>
<keyword id="KW-0411">Iron-sulfur</keyword>
<keyword id="KW-0479">Metal-binding</keyword>
<keyword id="KW-0489">Methyltransferase</keyword>
<keyword id="KW-0698">rRNA processing</keyword>
<keyword id="KW-0949">S-adenosyl-L-methionine</keyword>
<keyword id="KW-0808">Transferase</keyword>
<keyword id="KW-0819">tRNA processing</keyword>
<reference key="1">
    <citation type="submission" date="2007-07" db="EMBL/GenBank/DDBJ databases">
        <title>Complete sequence of chromosome of Shewanella baltica OS185.</title>
        <authorList>
            <consortium name="US DOE Joint Genome Institute"/>
            <person name="Copeland A."/>
            <person name="Lucas S."/>
            <person name="Lapidus A."/>
            <person name="Barry K."/>
            <person name="Glavina del Rio T."/>
            <person name="Dalin E."/>
            <person name="Tice H."/>
            <person name="Pitluck S."/>
            <person name="Sims D."/>
            <person name="Brettin T."/>
            <person name="Bruce D."/>
            <person name="Detter J.C."/>
            <person name="Han C."/>
            <person name="Schmutz J."/>
            <person name="Larimer F."/>
            <person name="Land M."/>
            <person name="Hauser L."/>
            <person name="Kyrpides N."/>
            <person name="Mikhailova N."/>
            <person name="Brettar I."/>
            <person name="Rodrigues J."/>
            <person name="Konstantinidis K."/>
            <person name="Tiedje J."/>
            <person name="Richardson P."/>
        </authorList>
    </citation>
    <scope>NUCLEOTIDE SEQUENCE [LARGE SCALE GENOMIC DNA]</scope>
    <source>
        <strain>OS185</strain>
    </source>
</reference>
<gene>
    <name evidence="1" type="primary">rlmN</name>
    <name type="ordered locus">Shew185_3008</name>
</gene>
<comment type="function">
    <text evidence="1">Specifically methylates position 2 of adenine 2503 in 23S rRNA and position 2 of adenine 37 in tRNAs. m2A2503 modification seems to play a crucial role in the proofreading step occurring at the peptidyl transferase center and thus would serve to optimize ribosomal fidelity.</text>
</comment>
<comment type="catalytic activity">
    <reaction evidence="1">
        <text>adenosine(2503) in 23S rRNA + 2 reduced [2Fe-2S]-[ferredoxin] + 2 S-adenosyl-L-methionine = 2-methyladenosine(2503) in 23S rRNA + 5'-deoxyadenosine + L-methionine + 2 oxidized [2Fe-2S]-[ferredoxin] + S-adenosyl-L-homocysteine</text>
        <dbReference type="Rhea" id="RHEA:42916"/>
        <dbReference type="Rhea" id="RHEA-COMP:10000"/>
        <dbReference type="Rhea" id="RHEA-COMP:10001"/>
        <dbReference type="Rhea" id="RHEA-COMP:10152"/>
        <dbReference type="Rhea" id="RHEA-COMP:10282"/>
        <dbReference type="ChEBI" id="CHEBI:17319"/>
        <dbReference type="ChEBI" id="CHEBI:33737"/>
        <dbReference type="ChEBI" id="CHEBI:33738"/>
        <dbReference type="ChEBI" id="CHEBI:57844"/>
        <dbReference type="ChEBI" id="CHEBI:57856"/>
        <dbReference type="ChEBI" id="CHEBI:59789"/>
        <dbReference type="ChEBI" id="CHEBI:74411"/>
        <dbReference type="ChEBI" id="CHEBI:74497"/>
        <dbReference type="EC" id="2.1.1.192"/>
    </reaction>
</comment>
<comment type="catalytic activity">
    <reaction evidence="1">
        <text>adenosine(37) in tRNA + 2 reduced [2Fe-2S]-[ferredoxin] + 2 S-adenosyl-L-methionine = 2-methyladenosine(37) in tRNA + 5'-deoxyadenosine + L-methionine + 2 oxidized [2Fe-2S]-[ferredoxin] + S-adenosyl-L-homocysteine</text>
        <dbReference type="Rhea" id="RHEA:43332"/>
        <dbReference type="Rhea" id="RHEA-COMP:10000"/>
        <dbReference type="Rhea" id="RHEA-COMP:10001"/>
        <dbReference type="Rhea" id="RHEA-COMP:10162"/>
        <dbReference type="Rhea" id="RHEA-COMP:10485"/>
        <dbReference type="ChEBI" id="CHEBI:17319"/>
        <dbReference type="ChEBI" id="CHEBI:33737"/>
        <dbReference type="ChEBI" id="CHEBI:33738"/>
        <dbReference type="ChEBI" id="CHEBI:57844"/>
        <dbReference type="ChEBI" id="CHEBI:57856"/>
        <dbReference type="ChEBI" id="CHEBI:59789"/>
        <dbReference type="ChEBI" id="CHEBI:74411"/>
        <dbReference type="ChEBI" id="CHEBI:74497"/>
        <dbReference type="EC" id="2.1.1.192"/>
    </reaction>
</comment>
<comment type="cofactor">
    <cofactor evidence="1">
        <name>[4Fe-4S] cluster</name>
        <dbReference type="ChEBI" id="CHEBI:49883"/>
    </cofactor>
    <text evidence="1">Binds 1 [4Fe-4S] cluster. The cluster is coordinated with 3 cysteines and an exchangeable S-adenosyl-L-methionine.</text>
</comment>
<comment type="subcellular location">
    <subcellularLocation>
        <location evidence="1">Cytoplasm</location>
    </subcellularLocation>
</comment>
<comment type="miscellaneous">
    <text evidence="1">Reaction proceeds by a ping-pong mechanism involving intermediate methylation of a conserved cysteine residue.</text>
</comment>
<comment type="similarity">
    <text evidence="1">Belongs to the radical SAM superfamily. RlmN family.</text>
</comment>
<accession>A6WQQ0</accession>
<feature type="chain" id="PRO_0000350394" description="Dual-specificity RNA methyltransferase RlmN">
    <location>
        <begin position="1"/>
        <end position="373"/>
    </location>
</feature>
<feature type="domain" description="Radical SAM core" evidence="2">
    <location>
        <begin position="100"/>
        <end position="339"/>
    </location>
</feature>
<feature type="active site" description="Proton acceptor" evidence="1">
    <location>
        <position position="94"/>
    </location>
</feature>
<feature type="active site" description="S-methylcysteine intermediate" evidence="1">
    <location>
        <position position="344"/>
    </location>
</feature>
<feature type="binding site" evidence="1">
    <location>
        <position position="114"/>
    </location>
    <ligand>
        <name>[4Fe-4S] cluster</name>
        <dbReference type="ChEBI" id="CHEBI:49883"/>
        <note>4Fe-4S-S-AdoMet</note>
    </ligand>
</feature>
<feature type="binding site" evidence="1">
    <location>
        <position position="118"/>
    </location>
    <ligand>
        <name>[4Fe-4S] cluster</name>
        <dbReference type="ChEBI" id="CHEBI:49883"/>
        <note>4Fe-4S-S-AdoMet</note>
    </ligand>
</feature>
<feature type="binding site" evidence="1">
    <location>
        <position position="121"/>
    </location>
    <ligand>
        <name>[4Fe-4S] cluster</name>
        <dbReference type="ChEBI" id="CHEBI:49883"/>
        <note>4Fe-4S-S-AdoMet</note>
    </ligand>
</feature>
<feature type="binding site" evidence="1">
    <location>
        <begin position="168"/>
        <end position="169"/>
    </location>
    <ligand>
        <name>S-adenosyl-L-methionine</name>
        <dbReference type="ChEBI" id="CHEBI:59789"/>
    </ligand>
</feature>
<feature type="binding site" evidence="1">
    <location>
        <position position="200"/>
    </location>
    <ligand>
        <name>S-adenosyl-L-methionine</name>
        <dbReference type="ChEBI" id="CHEBI:59789"/>
    </ligand>
</feature>
<feature type="binding site" evidence="1">
    <location>
        <begin position="222"/>
        <end position="224"/>
    </location>
    <ligand>
        <name>S-adenosyl-L-methionine</name>
        <dbReference type="ChEBI" id="CHEBI:59789"/>
    </ligand>
</feature>
<feature type="binding site" evidence="1">
    <location>
        <position position="301"/>
    </location>
    <ligand>
        <name>S-adenosyl-L-methionine</name>
        <dbReference type="ChEBI" id="CHEBI:59789"/>
    </ligand>
</feature>
<feature type="disulfide bond" description="(transient)" evidence="1">
    <location>
        <begin position="107"/>
        <end position="344"/>
    </location>
</feature>
<sequence>MSEKKINLLDLDRKAMRALFADMGEKPFRADQLMKWLYHFGVSDFEEMTNINKVLRQKLAARCEIVAPEISSFQKSTDGTIKFAINVGQGQEVETVYIPEDDRATLCVSSQVGCALECTFCSTGQQGFNRNLTVSEIVGQIWRVSHFLGFAKDTGERPITNVVMMGMGEPLLNLANVIPAMDIMLDDFGFSLSKRRVTLSTSGVVPALDKLGDALDVALAVSIHAPNDELRDILVPINKKYPLDEFLAGIRRYIAKSNANRGRVTVEYVMLDHINDSTDQAHELAKLMKDTPCKINLIPFNPYPGSPYGRSSNSRIDRFSKVLMEYGFTVIVRKTRGDDIDAACGQLAGDIRDRTKRLAKKRMQENQISVTMN</sequence>
<name>RLMN_SHEB8</name>
<protein>
    <recommendedName>
        <fullName evidence="1">Dual-specificity RNA methyltransferase RlmN</fullName>
        <ecNumber evidence="1">2.1.1.192</ecNumber>
    </recommendedName>
    <alternativeName>
        <fullName evidence="1">23S rRNA (adenine(2503)-C(2))-methyltransferase</fullName>
    </alternativeName>
    <alternativeName>
        <fullName evidence="1">23S rRNA m2A2503 methyltransferase</fullName>
    </alternativeName>
    <alternativeName>
        <fullName evidence="1">Ribosomal RNA large subunit methyltransferase N</fullName>
    </alternativeName>
    <alternativeName>
        <fullName evidence="1">tRNA (adenine(37)-C(2))-methyltransferase</fullName>
    </alternativeName>
    <alternativeName>
        <fullName evidence="1">tRNA m2A37 methyltransferase</fullName>
    </alternativeName>
</protein>